<feature type="chain" id="PRO_0000076140" description="Lon protease">
    <location>
        <begin position="1"/>
        <end position="795"/>
    </location>
</feature>
<feature type="domain" description="Lon N-terminal" evidence="3">
    <location>
        <begin position="7"/>
        <end position="213"/>
    </location>
</feature>
<feature type="domain" description="Lon proteolytic" evidence="2">
    <location>
        <begin position="615"/>
        <end position="795"/>
    </location>
</feature>
<feature type="active site" evidence="1">
    <location>
        <position position="702"/>
    </location>
</feature>
<feature type="active site" evidence="1">
    <location>
        <position position="745"/>
    </location>
</feature>
<feature type="binding site" evidence="1">
    <location>
        <begin position="379"/>
        <end position="386"/>
    </location>
    <ligand>
        <name>ATP</name>
        <dbReference type="ChEBI" id="CHEBI:30616"/>
    </ligand>
</feature>
<sequence length="795" mass="90204">MPAVKKPQILVVRNQVIFPYNGFELDVGRERSKKLIKALKNLKTKRLVLVTQKNSDQLNPEFDDIYHCGTLCDIDEIIEVPSEDGKTADYKIKGKGLQRVAITSFSDADLTKYDHHFLNSTLTENKALDKLLERIFPDKEDFAEILDSLNSFLELQELKKLSKVPKDIKRYDIITFKLASLIFKDITLQQAILEENDIEKRLQKIIGSGIEDLGHISEEARAKQRESEFDKIDNRITRKVNEQLSRQQRDFYLREKLRVIREEIGMTSKKEDEVSNIRKKLEENPYPEHIKKRILSELDHFENSSSSSQESTLTKTYIDTLMNLPWWQESKDNADVKNLIKILNKNHSGLDKVKERVVEYLAVQLRTKKLKGPIMCLVGPPGVGKSSLAKSIAEALNKCFVKVSLGGVHDESEIRGHRKTYLGSMPGRILKGMVRAKVINPLFLLDEIDKMTSSNQGYPSGALLEVLDPELNNKFSDNYVEEDYDLSKVMFVATANYIEDIPEALLDRMEVIELTSYTEQEKLQITKSHLVKRCLDDAEIKTDDLKFTDEGISYIIKFYTREAGVRQLERLIQQIVRKYIVNLQKTGEQQVVVDVDLVKKYLKKEIFDYTVRDEDALPGIVNGMAYTPTGGDLLPIEVTHVAGKGDLILTGNLKQTMRESASVALGYVKANAQSFNINPNLFKKVDINIHVPGGGIPKDGPSAGAALVTAIISSLTGKKVDPKIAMTGEITLRGKVMTIGGVKEKTISAYRGGVRTIFMPEKNERYLDEVPKDIVKDLEIILVKEYKDIYNKIFN</sequence>
<reference key="1">
    <citation type="journal article" date="1996" name="Nucleic Acids Res.">
        <title>Complete sequence analysis of the genome of the bacterium Mycoplasma pneumoniae.</title>
        <authorList>
            <person name="Himmelreich R."/>
            <person name="Hilbert H."/>
            <person name="Plagens H."/>
            <person name="Pirkl E."/>
            <person name="Li B.-C."/>
            <person name="Herrmann R."/>
        </authorList>
    </citation>
    <scope>NUCLEOTIDE SEQUENCE [LARGE SCALE GENOMIC DNA]</scope>
    <source>
        <strain>ATCC 29342 / M129 / Subtype 1</strain>
    </source>
</reference>
<protein>
    <recommendedName>
        <fullName evidence="1">Lon protease</fullName>
        <ecNumber evidence="1">3.4.21.53</ecNumber>
    </recommendedName>
    <alternativeName>
        <fullName evidence="1">ATP-dependent protease La</fullName>
    </alternativeName>
</protein>
<proteinExistence type="inferred from homology"/>
<evidence type="ECO:0000255" key="1">
    <source>
        <dbReference type="HAMAP-Rule" id="MF_01973"/>
    </source>
</evidence>
<evidence type="ECO:0000255" key="2">
    <source>
        <dbReference type="PROSITE-ProRule" id="PRU01122"/>
    </source>
</evidence>
<evidence type="ECO:0000255" key="3">
    <source>
        <dbReference type="PROSITE-ProRule" id="PRU01123"/>
    </source>
</evidence>
<organism>
    <name type="scientific">Mycoplasma pneumoniae (strain ATCC 29342 / M129 / Subtype 1)</name>
    <name type="common">Mycoplasmoides pneumoniae</name>
    <dbReference type="NCBI Taxonomy" id="272634"/>
    <lineage>
        <taxon>Bacteria</taxon>
        <taxon>Bacillati</taxon>
        <taxon>Mycoplasmatota</taxon>
        <taxon>Mycoplasmoidales</taxon>
        <taxon>Mycoplasmoidaceae</taxon>
        <taxon>Mycoplasmoides</taxon>
    </lineage>
</organism>
<gene>
    <name evidence="1" type="primary">lon</name>
    <name type="ordered locus">MPN_332</name>
    <name type="ORF">MP504</name>
</gene>
<comment type="function">
    <text evidence="1">ATP-dependent serine protease that mediates the selective degradation of mutant and abnormal proteins as well as certain short-lived regulatory proteins. Required for cellular homeostasis and for survival from DNA damage and developmental changes induced by stress. Degrades polypeptides processively to yield small peptide fragments that are 5 to 10 amino acids long. Binds to DNA in a double-stranded, site-specific manner.</text>
</comment>
<comment type="catalytic activity">
    <reaction evidence="1">
        <text>Hydrolysis of proteins in presence of ATP.</text>
        <dbReference type="EC" id="3.4.21.53"/>
    </reaction>
</comment>
<comment type="subunit">
    <text evidence="1">Homohexamer. Organized in a ring with a central cavity.</text>
</comment>
<comment type="subcellular location">
    <subcellularLocation>
        <location>Cytoplasm</location>
    </subcellularLocation>
</comment>
<comment type="induction">
    <text evidence="1">By heat shock.</text>
</comment>
<comment type="similarity">
    <text evidence="1">Belongs to the peptidase S16 family.</text>
</comment>
<dbReference type="EC" id="3.4.21.53" evidence="1"/>
<dbReference type="EMBL" id="U00089">
    <property type="protein sequence ID" value="AAB96152.1"/>
    <property type="molecule type" value="Genomic_DNA"/>
</dbReference>
<dbReference type="PIR" id="S73830">
    <property type="entry name" value="S73830"/>
</dbReference>
<dbReference type="RefSeq" id="NP_110020.1">
    <property type="nucleotide sequence ID" value="NC_000912.1"/>
</dbReference>
<dbReference type="RefSeq" id="WP_010874688.1">
    <property type="nucleotide sequence ID" value="NZ_OU342337.1"/>
</dbReference>
<dbReference type="SMR" id="P78025"/>
<dbReference type="STRING" id="272634.MPN_332"/>
<dbReference type="MEROPS" id="S16.004"/>
<dbReference type="EnsemblBacteria" id="AAB96152">
    <property type="protein sequence ID" value="AAB96152"/>
    <property type="gene ID" value="MPN_332"/>
</dbReference>
<dbReference type="KEGG" id="mpn:MPN_332"/>
<dbReference type="PATRIC" id="fig|272634.6.peg.356"/>
<dbReference type="HOGENOM" id="CLU_004109_4_3_14"/>
<dbReference type="OrthoDB" id="9803599at2"/>
<dbReference type="BioCyc" id="MPNE272634:G1GJ3-525-MONOMER"/>
<dbReference type="Proteomes" id="UP000000808">
    <property type="component" value="Chromosome"/>
</dbReference>
<dbReference type="GO" id="GO:0005737">
    <property type="term" value="C:cytoplasm"/>
    <property type="evidence" value="ECO:0007669"/>
    <property type="project" value="UniProtKB-SubCell"/>
</dbReference>
<dbReference type="GO" id="GO:0005524">
    <property type="term" value="F:ATP binding"/>
    <property type="evidence" value="ECO:0007669"/>
    <property type="project" value="UniProtKB-UniRule"/>
</dbReference>
<dbReference type="GO" id="GO:0016887">
    <property type="term" value="F:ATP hydrolysis activity"/>
    <property type="evidence" value="ECO:0007669"/>
    <property type="project" value="UniProtKB-UniRule"/>
</dbReference>
<dbReference type="GO" id="GO:0004176">
    <property type="term" value="F:ATP-dependent peptidase activity"/>
    <property type="evidence" value="ECO:0007669"/>
    <property type="project" value="UniProtKB-UniRule"/>
</dbReference>
<dbReference type="GO" id="GO:0043565">
    <property type="term" value="F:sequence-specific DNA binding"/>
    <property type="evidence" value="ECO:0007669"/>
    <property type="project" value="UniProtKB-UniRule"/>
</dbReference>
<dbReference type="GO" id="GO:0004252">
    <property type="term" value="F:serine-type endopeptidase activity"/>
    <property type="evidence" value="ECO:0007669"/>
    <property type="project" value="UniProtKB-UniRule"/>
</dbReference>
<dbReference type="GO" id="GO:0034605">
    <property type="term" value="P:cellular response to heat"/>
    <property type="evidence" value="ECO:0007669"/>
    <property type="project" value="UniProtKB-UniRule"/>
</dbReference>
<dbReference type="GO" id="GO:0006515">
    <property type="term" value="P:protein quality control for misfolded or incompletely synthesized proteins"/>
    <property type="evidence" value="ECO:0007669"/>
    <property type="project" value="UniProtKB-UniRule"/>
</dbReference>
<dbReference type="CDD" id="cd19500">
    <property type="entry name" value="RecA-like_Lon"/>
    <property type="match status" value="1"/>
</dbReference>
<dbReference type="FunFam" id="3.40.50.300:FF:000021">
    <property type="entry name" value="Lon protease homolog"/>
    <property type="match status" value="1"/>
</dbReference>
<dbReference type="Gene3D" id="1.10.8.60">
    <property type="match status" value="1"/>
</dbReference>
<dbReference type="Gene3D" id="1.20.5.5270">
    <property type="match status" value="1"/>
</dbReference>
<dbReference type="Gene3D" id="1.20.58.1480">
    <property type="match status" value="1"/>
</dbReference>
<dbReference type="Gene3D" id="3.30.230.10">
    <property type="match status" value="1"/>
</dbReference>
<dbReference type="Gene3D" id="2.30.130.40">
    <property type="entry name" value="LON domain-like"/>
    <property type="match status" value="1"/>
</dbReference>
<dbReference type="Gene3D" id="3.40.50.300">
    <property type="entry name" value="P-loop containing nucleotide triphosphate hydrolases"/>
    <property type="match status" value="1"/>
</dbReference>
<dbReference type="HAMAP" id="MF_01973">
    <property type="entry name" value="lon_bact"/>
    <property type="match status" value="1"/>
</dbReference>
<dbReference type="InterPro" id="IPR003593">
    <property type="entry name" value="AAA+_ATPase"/>
</dbReference>
<dbReference type="InterPro" id="IPR003959">
    <property type="entry name" value="ATPase_AAA_core"/>
</dbReference>
<dbReference type="InterPro" id="IPR027543">
    <property type="entry name" value="Lon_bac"/>
</dbReference>
<dbReference type="InterPro" id="IPR004815">
    <property type="entry name" value="Lon_bac/euk-typ"/>
</dbReference>
<dbReference type="InterPro" id="IPR054594">
    <property type="entry name" value="Lon_lid"/>
</dbReference>
<dbReference type="InterPro" id="IPR008269">
    <property type="entry name" value="Lon_proteolytic"/>
</dbReference>
<dbReference type="InterPro" id="IPR027065">
    <property type="entry name" value="Lon_Prtase"/>
</dbReference>
<dbReference type="InterPro" id="IPR003111">
    <property type="entry name" value="Lon_prtase_N"/>
</dbReference>
<dbReference type="InterPro" id="IPR046336">
    <property type="entry name" value="Lon_prtase_N_sf"/>
</dbReference>
<dbReference type="InterPro" id="IPR027417">
    <property type="entry name" value="P-loop_NTPase"/>
</dbReference>
<dbReference type="InterPro" id="IPR008268">
    <property type="entry name" value="Peptidase_S16_AS"/>
</dbReference>
<dbReference type="InterPro" id="IPR015947">
    <property type="entry name" value="PUA-like_sf"/>
</dbReference>
<dbReference type="InterPro" id="IPR020568">
    <property type="entry name" value="Ribosomal_Su5_D2-typ_SF"/>
</dbReference>
<dbReference type="InterPro" id="IPR014721">
    <property type="entry name" value="Ribsml_uS5_D2-typ_fold_subgr"/>
</dbReference>
<dbReference type="NCBIfam" id="TIGR00763">
    <property type="entry name" value="lon"/>
    <property type="match status" value="1"/>
</dbReference>
<dbReference type="PANTHER" id="PTHR10046">
    <property type="entry name" value="ATP DEPENDENT LON PROTEASE FAMILY MEMBER"/>
    <property type="match status" value="1"/>
</dbReference>
<dbReference type="Pfam" id="PF00004">
    <property type="entry name" value="AAA"/>
    <property type="match status" value="1"/>
</dbReference>
<dbReference type="Pfam" id="PF05362">
    <property type="entry name" value="Lon_C"/>
    <property type="match status" value="1"/>
</dbReference>
<dbReference type="Pfam" id="PF22667">
    <property type="entry name" value="Lon_lid"/>
    <property type="match status" value="1"/>
</dbReference>
<dbReference type="Pfam" id="PF02190">
    <property type="entry name" value="LON_substr_bdg"/>
    <property type="match status" value="1"/>
</dbReference>
<dbReference type="PIRSF" id="PIRSF001174">
    <property type="entry name" value="Lon_proteas"/>
    <property type="match status" value="1"/>
</dbReference>
<dbReference type="PRINTS" id="PR00830">
    <property type="entry name" value="ENDOLAPTASE"/>
</dbReference>
<dbReference type="SMART" id="SM00382">
    <property type="entry name" value="AAA"/>
    <property type="match status" value="1"/>
</dbReference>
<dbReference type="SMART" id="SM00464">
    <property type="entry name" value="LON"/>
    <property type="match status" value="1"/>
</dbReference>
<dbReference type="SUPFAM" id="SSF52540">
    <property type="entry name" value="P-loop containing nucleoside triphosphate hydrolases"/>
    <property type="match status" value="1"/>
</dbReference>
<dbReference type="SUPFAM" id="SSF88697">
    <property type="entry name" value="PUA domain-like"/>
    <property type="match status" value="1"/>
</dbReference>
<dbReference type="SUPFAM" id="SSF54211">
    <property type="entry name" value="Ribosomal protein S5 domain 2-like"/>
    <property type="match status" value="1"/>
</dbReference>
<dbReference type="PROSITE" id="PS51787">
    <property type="entry name" value="LON_N"/>
    <property type="match status" value="1"/>
</dbReference>
<dbReference type="PROSITE" id="PS51786">
    <property type="entry name" value="LON_PROTEOLYTIC"/>
    <property type="match status" value="1"/>
</dbReference>
<dbReference type="PROSITE" id="PS01046">
    <property type="entry name" value="LON_SER"/>
    <property type="match status" value="1"/>
</dbReference>
<keyword id="KW-0067">ATP-binding</keyword>
<keyword id="KW-0963">Cytoplasm</keyword>
<keyword id="KW-0378">Hydrolase</keyword>
<keyword id="KW-0547">Nucleotide-binding</keyword>
<keyword id="KW-0645">Protease</keyword>
<keyword id="KW-1185">Reference proteome</keyword>
<keyword id="KW-0720">Serine protease</keyword>
<keyword id="KW-0346">Stress response</keyword>
<accession>P78025</accession>
<name>LON_MYCPN</name>